<reference key="1">
    <citation type="journal article" date="2001" name="Biochem. Biophys. Res. Commun.">
        <title>Cloning and functional characterization of DSCAML1, a novel DSCAM-like cell adhesion molecule that mediates homophilic intercellular adhesion.</title>
        <authorList>
            <person name="Agarwala K.L."/>
            <person name="Ganesh S."/>
            <person name="Tsutsumi Y."/>
            <person name="Suzuki T."/>
            <person name="Amano K."/>
            <person name="Yamakawa K."/>
        </authorList>
    </citation>
    <scope>NUCLEOTIDE SEQUENCE [MRNA] (ISOFORM 1)</scope>
    <scope>FUNCTION</scope>
    <scope>SUBCELLULAR LOCATION</scope>
    <scope>TISSUE SPECIFICITY</scope>
    <source>
        <tissue>Fetal brain</tissue>
    </source>
</reference>
<reference key="2">
    <citation type="journal article" date="2002" name="Biochem. Biophys. Res. Commun.">
        <title>Mammalian DSCAMs: roles in the development of the spinal cord, cortex, and cerebellum?</title>
        <authorList>
            <person name="Barlow G.M."/>
            <person name="Micales B."/>
            <person name="Chen X.-N."/>
            <person name="Lyons G.E."/>
            <person name="Korenberg J.R."/>
        </authorList>
    </citation>
    <scope>NUCLEOTIDE SEQUENCE [MRNA] (ISOFORM 1)</scope>
    <scope>ALTERNATIVE SPLICING</scope>
    <scope>TISSUE SPECIFICITY</scope>
</reference>
<reference key="3">
    <citation type="submission" date="2000-09" db="EMBL/GenBank/DDBJ databases">
        <title>DSCAML1, a novel member of the immunoglobulin superfamily.</title>
        <authorList>
            <person name="Lin S."/>
            <person name="Wang Z."/>
            <person name="Ying K."/>
            <person name="Xie Y."/>
            <person name="Mao Y."/>
        </authorList>
    </citation>
    <scope>NUCLEOTIDE SEQUENCE [MRNA] (ISOFORMS 1 AND 2)</scope>
    <source>
        <tissue>Fetal brain</tissue>
    </source>
</reference>
<reference key="4">
    <citation type="journal article" date="1999" name="DNA Res.">
        <title>Characterization of cDNA clones selected by the GeneMark analysis from size-fractionated cDNA libraries from human brain.</title>
        <authorList>
            <person name="Hirosawa M."/>
            <person name="Nagase T."/>
            <person name="Ishikawa K."/>
            <person name="Kikuno R."/>
            <person name="Nomura N."/>
            <person name="Ohara O."/>
        </authorList>
    </citation>
    <scope>NUCLEOTIDE SEQUENCE [LARGE SCALE MRNA] (ISOFORM 1)</scope>
    <source>
        <tissue>Brain</tissue>
    </source>
</reference>
<reference key="5">
    <citation type="journal article" date="2002" name="DNA Res.">
        <title>Construction of expression-ready cDNA clones for KIAA genes: manual curation of 330 KIAA cDNA clones.</title>
        <authorList>
            <person name="Nakajima D."/>
            <person name="Okazaki N."/>
            <person name="Yamakawa H."/>
            <person name="Kikuno R."/>
            <person name="Ohara O."/>
            <person name="Nagase T."/>
        </authorList>
    </citation>
    <scope>SEQUENCE REVISION</scope>
</reference>
<reference key="6">
    <citation type="journal article" date="2006" name="Nature">
        <title>Human chromosome 11 DNA sequence and analysis including novel gene identification.</title>
        <authorList>
            <person name="Taylor T.D."/>
            <person name="Noguchi H."/>
            <person name="Totoki Y."/>
            <person name="Toyoda A."/>
            <person name="Kuroki Y."/>
            <person name="Dewar K."/>
            <person name="Lloyd C."/>
            <person name="Itoh T."/>
            <person name="Takeda T."/>
            <person name="Kim D.-W."/>
            <person name="She X."/>
            <person name="Barlow K.F."/>
            <person name="Bloom T."/>
            <person name="Bruford E."/>
            <person name="Chang J.L."/>
            <person name="Cuomo C.A."/>
            <person name="Eichler E."/>
            <person name="FitzGerald M.G."/>
            <person name="Jaffe D.B."/>
            <person name="LaButti K."/>
            <person name="Nicol R."/>
            <person name="Park H.-S."/>
            <person name="Seaman C."/>
            <person name="Sougnez C."/>
            <person name="Yang X."/>
            <person name="Zimmer A.R."/>
            <person name="Zody M.C."/>
            <person name="Birren B.W."/>
            <person name="Nusbaum C."/>
            <person name="Fujiyama A."/>
            <person name="Hattori M."/>
            <person name="Rogers J."/>
            <person name="Lander E.S."/>
            <person name="Sakaki Y."/>
        </authorList>
    </citation>
    <scope>NUCLEOTIDE SEQUENCE [LARGE SCALE GENOMIC DNA]</scope>
</reference>
<reference key="7">
    <citation type="submission" date="2005-07" db="EMBL/GenBank/DDBJ databases">
        <authorList>
            <person name="Mural R.J."/>
            <person name="Istrail S."/>
            <person name="Sutton G.G."/>
            <person name="Florea L."/>
            <person name="Halpern A.L."/>
            <person name="Mobarry C.M."/>
            <person name="Lippert R."/>
            <person name="Walenz B."/>
            <person name="Shatkay H."/>
            <person name="Dew I."/>
            <person name="Miller J.R."/>
            <person name="Flanigan M.J."/>
            <person name="Edwards N.J."/>
            <person name="Bolanos R."/>
            <person name="Fasulo D."/>
            <person name="Halldorsson B.V."/>
            <person name="Hannenhalli S."/>
            <person name="Turner R."/>
            <person name="Yooseph S."/>
            <person name="Lu F."/>
            <person name="Nusskern D.R."/>
            <person name="Shue B.C."/>
            <person name="Zheng X.H."/>
            <person name="Zhong F."/>
            <person name="Delcher A.L."/>
            <person name="Huson D.H."/>
            <person name="Kravitz S.A."/>
            <person name="Mouchard L."/>
            <person name="Reinert K."/>
            <person name="Remington K.A."/>
            <person name="Clark A.G."/>
            <person name="Waterman M.S."/>
            <person name="Eichler E.E."/>
            <person name="Adams M.D."/>
            <person name="Hunkapiller M.W."/>
            <person name="Myers E.W."/>
            <person name="Venter J.C."/>
        </authorList>
    </citation>
    <scope>NUCLEOTIDE SEQUENCE [LARGE SCALE GENOMIC DNA]</scope>
</reference>
<reference key="8">
    <citation type="submission" date="2005-02" db="PDB data bank">
        <title>Solution structure of the second FNIII domain of DSCAML1 protein.</title>
        <authorList>
            <consortium name="RIKEN structural genomics initiative (RSGI)"/>
        </authorList>
    </citation>
    <scope>STRUCTURE BY NMR OF 979-1087</scope>
</reference>
<reference key="9">
    <citation type="journal article" date="2006" name="Science">
        <title>The consensus coding sequences of human breast and colorectal cancers.</title>
        <authorList>
            <person name="Sjoeblom T."/>
            <person name="Jones S."/>
            <person name="Wood L.D."/>
            <person name="Parsons D.W."/>
            <person name="Lin J."/>
            <person name="Barber T.D."/>
            <person name="Mandelker D."/>
            <person name="Leary R.J."/>
            <person name="Ptak J."/>
            <person name="Silliman N."/>
            <person name="Szabo S."/>
            <person name="Buckhaults P."/>
            <person name="Farrell C."/>
            <person name="Meeh P."/>
            <person name="Markowitz S.D."/>
            <person name="Willis J."/>
            <person name="Dawson D."/>
            <person name="Willson J.K.V."/>
            <person name="Gazdar A.F."/>
            <person name="Hartigan J."/>
            <person name="Wu L."/>
            <person name="Liu C."/>
            <person name="Parmigiani G."/>
            <person name="Park B.H."/>
            <person name="Bachman K.E."/>
            <person name="Papadopoulos N."/>
            <person name="Vogelstein B."/>
            <person name="Kinzler K.W."/>
            <person name="Velculescu V.E."/>
        </authorList>
    </citation>
    <scope>VARIANTS [LARGE SCALE ANALYSIS] ILE-659 AND ILE-1702</scope>
</reference>
<name>DSCL1_HUMAN</name>
<feature type="signal peptide" evidence="3">
    <location>
        <begin position="1"/>
        <end position="18"/>
    </location>
</feature>
<feature type="chain" id="PRO_0000014748" description="Cell adhesion molecule DSCAML1">
    <location>
        <begin position="19"/>
        <end position="2053"/>
    </location>
</feature>
<feature type="topological domain" description="Extracellular" evidence="3">
    <location>
        <begin position="19"/>
        <end position="1591"/>
    </location>
</feature>
<feature type="transmembrane region" description="Helical" evidence="3">
    <location>
        <begin position="1592"/>
        <end position="1612"/>
    </location>
</feature>
<feature type="topological domain" description="Cytoplasmic" evidence="3">
    <location>
        <begin position="1613"/>
        <end position="2053"/>
    </location>
</feature>
<feature type="domain" description="Ig-like C2-type 1">
    <location>
        <begin position="19"/>
        <end position="119"/>
    </location>
</feature>
<feature type="domain" description="Ig-like C2-type 2">
    <location>
        <begin position="115"/>
        <end position="217"/>
    </location>
</feature>
<feature type="domain" description="Ig-like C2-type 3">
    <location>
        <begin position="226"/>
        <end position="306"/>
    </location>
</feature>
<feature type="domain" description="Ig-like C2-type 4">
    <location>
        <begin position="314"/>
        <end position="402"/>
    </location>
</feature>
<feature type="domain" description="Ig-like C2-type 5">
    <location>
        <begin position="408"/>
        <end position="501"/>
    </location>
</feature>
<feature type="domain" description="Ig-like C2-type 6">
    <location>
        <begin position="506"/>
        <end position="586"/>
    </location>
</feature>
<feature type="domain" description="Ig-like C2-type 7">
    <location>
        <begin position="596"/>
        <end position="685"/>
    </location>
</feature>
<feature type="domain" description="Ig-like C2-type 8">
    <location>
        <begin position="690"/>
        <end position="784"/>
    </location>
</feature>
<feature type="domain" description="Ig-like C2-type 9">
    <location>
        <begin position="788"/>
        <end position="885"/>
    </location>
</feature>
<feature type="domain" description="Fibronectin type-III 1" evidence="5">
    <location>
        <begin position="887"/>
        <end position="984"/>
    </location>
</feature>
<feature type="domain" description="Fibronectin type-III 2" evidence="5">
    <location>
        <begin position="989"/>
        <end position="1088"/>
    </location>
</feature>
<feature type="domain" description="Fibronectin type-III 3" evidence="5">
    <location>
        <begin position="1093"/>
        <end position="1189"/>
    </location>
</feature>
<feature type="domain" description="Fibronectin type-III 4" evidence="5">
    <location>
        <begin position="1193"/>
        <end position="1288"/>
    </location>
</feature>
<feature type="domain" description="Ig-like C2-type 10">
    <location>
        <begin position="1278"/>
        <end position="1377"/>
    </location>
</feature>
<feature type="domain" description="Fibronectin type-III 5" evidence="5">
    <location>
        <begin position="1383"/>
        <end position="1477"/>
    </location>
</feature>
<feature type="domain" description="Fibronectin type-III 6" evidence="5">
    <location>
        <begin position="1478"/>
        <end position="1578"/>
    </location>
</feature>
<feature type="region of interest" description="Disordered" evidence="6">
    <location>
        <begin position="1715"/>
        <end position="1741"/>
    </location>
</feature>
<feature type="region of interest" description="Disordered" evidence="6">
    <location>
        <begin position="1773"/>
        <end position="1803"/>
    </location>
</feature>
<feature type="region of interest" description="Disordered" evidence="6">
    <location>
        <begin position="1840"/>
        <end position="1862"/>
    </location>
</feature>
<feature type="region of interest" description="Disordered" evidence="6">
    <location>
        <begin position="1974"/>
        <end position="2053"/>
    </location>
</feature>
<feature type="compositionally biased region" description="Basic residues" evidence="6">
    <location>
        <begin position="1732"/>
        <end position="1741"/>
    </location>
</feature>
<feature type="compositionally biased region" description="Polar residues" evidence="6">
    <location>
        <begin position="1773"/>
        <end position="1789"/>
    </location>
</feature>
<feature type="compositionally biased region" description="Pro residues" evidence="6">
    <location>
        <begin position="1977"/>
        <end position="2009"/>
    </location>
</feature>
<feature type="compositionally biased region" description="Polar residues" evidence="6">
    <location>
        <begin position="2029"/>
        <end position="2041"/>
    </location>
</feature>
<feature type="glycosylation site" description="N-linked (GlcNAc...) asparagine" evidence="3">
    <location>
        <position position="29"/>
    </location>
</feature>
<feature type="glycosylation site" description="N-linked (GlcNAc...) asparagine" evidence="3">
    <location>
        <position position="79"/>
    </location>
</feature>
<feature type="glycosylation site" description="N-linked (GlcNAc...) asparagine" evidence="3">
    <location>
        <position position="368"/>
    </location>
</feature>
<feature type="glycosylation site" description="N-linked (GlcNAc...) asparagine" evidence="3">
    <location>
        <position position="471"/>
    </location>
</feature>
<feature type="glycosylation site" description="N-linked (GlcNAc...) asparagine" evidence="3">
    <location>
        <position position="513"/>
    </location>
</feature>
<feature type="glycosylation site" description="N-linked (GlcNAc...) asparagine" evidence="3">
    <location>
        <position position="556"/>
    </location>
</feature>
<feature type="glycosylation site" description="N-linked (GlcNAc...) asparagine" evidence="3">
    <location>
        <position position="666"/>
    </location>
</feature>
<feature type="glycosylation site" description="N-linked (GlcNAc...) asparagine" evidence="3">
    <location>
        <position position="710"/>
    </location>
</feature>
<feature type="glycosylation site" description="N-linked (GlcNAc...) asparagine" evidence="3">
    <location>
        <position position="749"/>
    </location>
</feature>
<feature type="glycosylation site" description="N-linked (GlcNAc...) asparagine" evidence="3">
    <location>
        <position position="796"/>
    </location>
</feature>
<feature type="glycosylation site" description="N-linked (GlcNAc...) asparagine" evidence="3">
    <location>
        <position position="809"/>
    </location>
</feature>
<feature type="glycosylation site" description="N-linked (GlcNAc...) asparagine" evidence="3">
    <location>
        <position position="926"/>
    </location>
</feature>
<feature type="glycosylation site" description="N-linked (GlcNAc...) asparagine" evidence="3">
    <location>
        <position position="1082"/>
    </location>
</feature>
<feature type="glycosylation site" description="N-linked (GlcNAc...) asparagine" evidence="3">
    <location>
        <position position="1144"/>
    </location>
</feature>
<feature type="glycosylation site" description="N-linked (GlcNAc...) asparagine" evidence="3">
    <location>
        <position position="1162"/>
    </location>
</feature>
<feature type="glycosylation site" description="N-linked (GlcNAc...) asparagine" evidence="3">
    <location>
        <position position="1275"/>
    </location>
</feature>
<feature type="glycosylation site" description="N-linked (GlcNAc...) asparagine" evidence="3">
    <location>
        <position position="1345"/>
    </location>
</feature>
<feature type="glycosylation site" description="N-linked (GlcNAc...) asparagine" evidence="3">
    <location>
        <position position="1492"/>
    </location>
</feature>
<feature type="glycosylation site" description="N-linked (GlcNAc...) asparagine" evidence="3">
    <location>
        <position position="1531"/>
    </location>
</feature>
<feature type="glycosylation site" description="N-linked (GlcNAc...) asparagine" evidence="3">
    <location>
        <position position="1561"/>
    </location>
</feature>
<feature type="disulfide bond" evidence="4">
    <location>
        <begin position="47"/>
        <end position="103"/>
    </location>
</feature>
<feature type="disulfide bond" evidence="4">
    <location>
        <begin position="146"/>
        <end position="198"/>
    </location>
</feature>
<feature type="disulfide bond" evidence="4">
    <location>
        <begin position="247"/>
        <end position="294"/>
    </location>
</feature>
<feature type="disulfide bond" evidence="4">
    <location>
        <begin position="336"/>
        <end position="386"/>
    </location>
</feature>
<feature type="disulfide bond" evidence="4">
    <location>
        <begin position="429"/>
        <end position="485"/>
    </location>
</feature>
<feature type="disulfide bond" evidence="4">
    <location>
        <begin position="526"/>
        <end position="575"/>
    </location>
</feature>
<feature type="disulfide bond" evidence="4">
    <location>
        <begin position="617"/>
        <end position="669"/>
    </location>
</feature>
<feature type="disulfide bond" evidence="4">
    <location>
        <begin position="711"/>
        <end position="767"/>
    </location>
</feature>
<feature type="disulfide bond" evidence="4">
    <location>
        <begin position="810"/>
        <end position="867"/>
    </location>
</feature>
<feature type="disulfide bond" evidence="4">
    <location>
        <begin position="1311"/>
        <end position="1363"/>
    </location>
</feature>
<feature type="splice variant" id="VSP_014978" description="In isoform 2." evidence="11">
    <location>
        <begin position="35"/>
        <end position="244"/>
    </location>
</feature>
<feature type="sequence variant" id="VAR_035512" description="In a colorectal cancer sample; somatic mutation; dbSNP:rs533175875." evidence="9">
    <original>V</original>
    <variation>I</variation>
    <location>
        <position position="659"/>
    </location>
</feature>
<feature type="sequence variant" id="VAR_035513" description="In a colorectal cancer sample; somatic mutation; dbSNP:rs147907435." evidence="9">
    <original>V</original>
    <variation>I</variation>
    <location>
        <position position="1702"/>
    </location>
</feature>
<feature type="sequence conflict" description="In Ref. 3; AAN32613/AAN32614." evidence="12" ref="3">
    <original>V</original>
    <variation>L</variation>
    <location>
        <position position="4"/>
    </location>
</feature>
<feature type="sequence conflict" description="In Ref. 3; AAN32613." evidence="12" ref="3">
    <original>SSV</original>
    <variation>FLG</variation>
    <location>
        <begin position="150"/>
        <end position="152"/>
    </location>
</feature>
<feature type="sequence conflict" description="In Ref. 1; AAL57166 and 4; BAA86446." evidence="12" ref="1 4">
    <original>H</original>
    <variation>N</variation>
    <location>
        <position position="172"/>
    </location>
</feature>
<feature type="sequence conflict" description="In Ref. 3; AAN32614." evidence="12" ref="3">
    <original>S</original>
    <variation>P</variation>
    <location>
        <position position="250"/>
    </location>
</feature>
<feature type="sequence conflict" description="In Ref. 3; AAN32613." evidence="12" ref="3">
    <original>H</original>
    <variation>Y</variation>
    <location>
        <position position="469"/>
    </location>
</feature>
<feature type="sequence conflict" description="In Ref. 3; AAN32613/AAN32614." evidence="12" ref="3">
    <original>Y</original>
    <variation>D</variation>
    <location>
        <position position="667"/>
    </location>
</feature>
<feature type="strand" evidence="13">
    <location>
        <begin position="991"/>
        <end position="997"/>
    </location>
</feature>
<feature type="strand" evidence="13">
    <location>
        <begin position="999"/>
        <end position="1008"/>
    </location>
</feature>
<feature type="strand" evidence="13">
    <location>
        <begin position="1021"/>
        <end position="1030"/>
    </location>
</feature>
<feature type="strand" evidence="13">
    <location>
        <begin position="1046"/>
        <end position="1055"/>
    </location>
</feature>
<feature type="strand" evidence="13">
    <location>
        <begin position="1062"/>
        <end position="1070"/>
    </location>
</feature>
<protein>
    <recommendedName>
        <fullName evidence="12">Cell adhesion molecule DSCAML1</fullName>
    </recommendedName>
    <alternativeName>
        <fullName>Down syndrome cell adhesion molecule 2</fullName>
    </alternativeName>
    <alternativeName>
        <fullName>Down syndrome cell adhesion molecule-like protein 1</fullName>
    </alternativeName>
</protein>
<keyword id="KW-0002">3D-structure</keyword>
<keyword id="KW-0025">Alternative splicing</keyword>
<keyword id="KW-0130">Cell adhesion</keyword>
<keyword id="KW-1003">Cell membrane</keyword>
<keyword id="KW-1015">Disulfide bond</keyword>
<keyword id="KW-0325">Glycoprotein</keyword>
<keyword id="KW-0393">Immunoglobulin domain</keyword>
<keyword id="KW-0472">Membrane</keyword>
<keyword id="KW-0524">Neurogenesis</keyword>
<keyword id="KW-1267">Proteomics identification</keyword>
<keyword id="KW-1185">Reference proteome</keyword>
<keyword id="KW-0677">Repeat</keyword>
<keyword id="KW-0732">Signal</keyword>
<keyword id="KW-0770">Synapse</keyword>
<keyword id="KW-0812">Transmembrane</keyword>
<keyword id="KW-1133">Transmembrane helix</keyword>
<dbReference type="EMBL" id="AF334384">
    <property type="protein sequence ID" value="AAL57166.1"/>
    <property type="molecule type" value="mRNA"/>
</dbReference>
<dbReference type="EMBL" id="AF491813">
    <property type="protein sequence ID" value="AAM09558.1"/>
    <property type="status" value="ALT_INIT"/>
    <property type="molecule type" value="mRNA"/>
</dbReference>
<dbReference type="EMBL" id="AF304304">
    <property type="protein sequence ID" value="AAN32613.1"/>
    <property type="molecule type" value="mRNA"/>
</dbReference>
<dbReference type="EMBL" id="AF304305">
    <property type="protein sequence ID" value="AAN32614.1"/>
    <property type="status" value="ALT_SEQ"/>
    <property type="molecule type" value="mRNA"/>
</dbReference>
<dbReference type="EMBL" id="AB032958">
    <property type="protein sequence ID" value="BAA86446.2"/>
    <property type="status" value="ALT_INIT"/>
    <property type="molecule type" value="mRNA"/>
</dbReference>
<dbReference type="EMBL" id="AP000711">
    <property type="status" value="NOT_ANNOTATED_CDS"/>
    <property type="molecule type" value="Genomic_DNA"/>
</dbReference>
<dbReference type="EMBL" id="AP000757">
    <property type="status" value="NOT_ANNOTATED_CDS"/>
    <property type="molecule type" value="Genomic_DNA"/>
</dbReference>
<dbReference type="EMBL" id="AP001554">
    <property type="status" value="NOT_ANNOTATED_CDS"/>
    <property type="molecule type" value="Genomic_DNA"/>
</dbReference>
<dbReference type="EMBL" id="AP002342">
    <property type="status" value="NOT_ANNOTATED_CDS"/>
    <property type="molecule type" value="Genomic_DNA"/>
</dbReference>
<dbReference type="EMBL" id="KF511128">
    <property type="status" value="NOT_ANNOTATED_CDS"/>
    <property type="molecule type" value="Genomic_DNA"/>
</dbReference>
<dbReference type="EMBL" id="CH471065">
    <property type="protein sequence ID" value="EAW67322.1"/>
    <property type="molecule type" value="Genomic_DNA"/>
</dbReference>
<dbReference type="CCDS" id="CCDS8384.2">
    <molecule id="Q8TD84-1"/>
</dbReference>
<dbReference type="RefSeq" id="NP_065744.2">
    <molecule id="Q8TD84-1"/>
    <property type="nucleotide sequence ID" value="NM_020693.3"/>
</dbReference>
<dbReference type="PDB" id="1VA9">
    <property type="method" value="NMR"/>
    <property type="chains" value="A=979-1087"/>
</dbReference>
<dbReference type="PDBsum" id="1VA9"/>
<dbReference type="SMR" id="Q8TD84"/>
<dbReference type="BioGRID" id="121525">
    <property type="interactions" value="8"/>
</dbReference>
<dbReference type="FunCoup" id="Q8TD84">
    <property type="interactions" value="260"/>
</dbReference>
<dbReference type="IntAct" id="Q8TD84">
    <property type="interactions" value="4"/>
</dbReference>
<dbReference type="STRING" id="9606.ENSP00000315465"/>
<dbReference type="GlyCosmos" id="Q8TD84">
    <property type="glycosylation" value="21 sites, 1 glycan"/>
</dbReference>
<dbReference type="GlyGen" id="Q8TD84">
    <property type="glycosylation" value="25 sites, 1 O-linked glycan (2 sites)"/>
</dbReference>
<dbReference type="iPTMnet" id="Q8TD84"/>
<dbReference type="PhosphoSitePlus" id="Q8TD84"/>
<dbReference type="BioMuta" id="DSCAML1"/>
<dbReference type="DMDM" id="73620825"/>
<dbReference type="jPOST" id="Q8TD84"/>
<dbReference type="MassIVE" id="Q8TD84"/>
<dbReference type="PaxDb" id="9606-ENSP00000315465"/>
<dbReference type="PeptideAtlas" id="Q8TD84"/>
<dbReference type="ProteomicsDB" id="32317"/>
<dbReference type="ProteomicsDB" id="74248">
    <molecule id="Q8TD84-1"/>
</dbReference>
<dbReference type="ProteomicsDB" id="74249">
    <molecule id="Q8TD84-2"/>
</dbReference>
<dbReference type="Antibodypedia" id="62371">
    <property type="antibodies" value="25 antibodies from 14 providers"/>
</dbReference>
<dbReference type="DNASU" id="57453"/>
<dbReference type="Ensembl" id="ENST00000527706.5">
    <molecule id="Q8TD84-2"/>
    <property type="protein sequence ID" value="ENSP00000434335.1"/>
    <property type="gene ID" value="ENSG00000177103.15"/>
</dbReference>
<dbReference type="Ensembl" id="ENST00000651296.2">
    <molecule id="Q8TD84-1"/>
    <property type="protein sequence ID" value="ENSP00000498769.1"/>
    <property type="gene ID" value="ENSG00000177103.15"/>
</dbReference>
<dbReference type="GeneID" id="57453"/>
<dbReference type="KEGG" id="hsa:57453"/>
<dbReference type="MANE-Select" id="ENST00000651296.2">
    <property type="protein sequence ID" value="ENSP00000498769.1"/>
    <property type="RefSeq nucleotide sequence ID" value="NM_020693.4"/>
    <property type="RefSeq protein sequence ID" value="NP_065744.3"/>
</dbReference>
<dbReference type="UCSC" id="uc001prh.1">
    <molecule id="Q8TD84-1"/>
    <property type="organism name" value="human"/>
</dbReference>
<dbReference type="UCSC" id="uc058hud.1">
    <property type="organism name" value="human"/>
</dbReference>
<dbReference type="AGR" id="HGNC:14656"/>
<dbReference type="CTD" id="57453"/>
<dbReference type="DisGeNET" id="57453"/>
<dbReference type="GeneCards" id="DSCAML1"/>
<dbReference type="HGNC" id="HGNC:14656">
    <property type="gene designation" value="DSCAML1"/>
</dbReference>
<dbReference type="HPA" id="ENSG00000177103">
    <property type="expression patterns" value="Tissue enhanced (brain, retina)"/>
</dbReference>
<dbReference type="MalaCards" id="DSCAML1"/>
<dbReference type="MIM" id="611782">
    <property type="type" value="gene"/>
</dbReference>
<dbReference type="neXtProt" id="NX_Q8TD84"/>
<dbReference type="OpenTargets" id="ENSG00000177103"/>
<dbReference type="PharmGKB" id="PA38384"/>
<dbReference type="VEuPathDB" id="HostDB:ENSG00000177103"/>
<dbReference type="eggNOG" id="KOG3510">
    <property type="taxonomic scope" value="Eukaryota"/>
</dbReference>
<dbReference type="GeneTree" id="ENSGT00940000155354"/>
<dbReference type="HOGENOM" id="CLU_001038_0_1_1"/>
<dbReference type="InParanoid" id="Q8TD84"/>
<dbReference type="OrthoDB" id="6429135at2759"/>
<dbReference type="PAN-GO" id="Q8TD84">
    <property type="GO annotations" value="6 GO annotations based on evolutionary models"/>
</dbReference>
<dbReference type="PhylomeDB" id="Q8TD84"/>
<dbReference type="TreeFam" id="TF316846"/>
<dbReference type="PathwayCommons" id="Q8TD84"/>
<dbReference type="Reactome" id="R-HSA-376172">
    <property type="pathway name" value="DSCAM interactions"/>
</dbReference>
<dbReference type="SignaLink" id="Q8TD84"/>
<dbReference type="SIGNOR" id="Q8TD84"/>
<dbReference type="BioGRID-ORCS" id="57453">
    <property type="hits" value="6 hits in 1145 CRISPR screens"/>
</dbReference>
<dbReference type="ChiTaRS" id="DSCAML1">
    <property type="organism name" value="human"/>
</dbReference>
<dbReference type="EvolutionaryTrace" id="Q8TD84"/>
<dbReference type="GenomeRNAi" id="57453"/>
<dbReference type="Pharos" id="Q8TD84">
    <property type="development level" value="Tbio"/>
</dbReference>
<dbReference type="PRO" id="PR:Q8TD84"/>
<dbReference type="Proteomes" id="UP000005640">
    <property type="component" value="Chromosome 11"/>
</dbReference>
<dbReference type="RNAct" id="Q8TD84">
    <property type="molecule type" value="protein"/>
</dbReference>
<dbReference type="Bgee" id="ENSG00000177103">
    <property type="expression patterns" value="Expressed in cortical plate and 131 other cell types or tissues"/>
</dbReference>
<dbReference type="ExpressionAtlas" id="Q8TD84">
    <property type="expression patterns" value="baseline and differential"/>
</dbReference>
<dbReference type="GO" id="GO:0030424">
    <property type="term" value="C:axon"/>
    <property type="evidence" value="ECO:0000318"/>
    <property type="project" value="GO_Central"/>
</dbReference>
<dbReference type="GO" id="GO:0009986">
    <property type="term" value="C:cell surface"/>
    <property type="evidence" value="ECO:0000314"/>
    <property type="project" value="UniProtKB"/>
</dbReference>
<dbReference type="GO" id="GO:0005615">
    <property type="term" value="C:extracellular space"/>
    <property type="evidence" value="ECO:0007005"/>
    <property type="project" value="UniProtKB"/>
</dbReference>
<dbReference type="GO" id="GO:0005886">
    <property type="term" value="C:plasma membrane"/>
    <property type="evidence" value="ECO:0000318"/>
    <property type="project" value="GO_Central"/>
</dbReference>
<dbReference type="GO" id="GO:0045202">
    <property type="term" value="C:synapse"/>
    <property type="evidence" value="ECO:0007669"/>
    <property type="project" value="UniProtKB-SubCell"/>
</dbReference>
<dbReference type="GO" id="GO:0098632">
    <property type="term" value="F:cell-cell adhesion mediator activity"/>
    <property type="evidence" value="ECO:0000318"/>
    <property type="project" value="GO_Central"/>
</dbReference>
<dbReference type="GO" id="GO:0042803">
    <property type="term" value="F:protein homodimerization activity"/>
    <property type="evidence" value="ECO:0000314"/>
    <property type="project" value="UniProtKB"/>
</dbReference>
<dbReference type="GO" id="GO:0007411">
    <property type="term" value="P:axon guidance"/>
    <property type="evidence" value="ECO:0000318"/>
    <property type="project" value="GO_Central"/>
</dbReference>
<dbReference type="GO" id="GO:0007409">
    <property type="term" value="P:axonogenesis"/>
    <property type="evidence" value="ECO:0000303"/>
    <property type="project" value="UniProtKB"/>
</dbReference>
<dbReference type="GO" id="GO:0007420">
    <property type="term" value="P:brain development"/>
    <property type="evidence" value="ECO:0000314"/>
    <property type="project" value="UniProtKB"/>
</dbReference>
<dbReference type="GO" id="GO:0001709">
    <property type="term" value="P:cell fate determination"/>
    <property type="evidence" value="ECO:0000303"/>
    <property type="project" value="UniProtKB"/>
</dbReference>
<dbReference type="GO" id="GO:0007417">
    <property type="term" value="P:central nervous system development"/>
    <property type="evidence" value="ECO:0000318"/>
    <property type="project" value="GO_Central"/>
</dbReference>
<dbReference type="GO" id="GO:0070593">
    <property type="term" value="P:dendrite self-avoidance"/>
    <property type="evidence" value="ECO:0000318"/>
    <property type="project" value="GO_Central"/>
</dbReference>
<dbReference type="GO" id="GO:0009953">
    <property type="term" value="P:dorsal/ventral pattern formation"/>
    <property type="evidence" value="ECO:0000303"/>
    <property type="project" value="UniProtKB"/>
</dbReference>
<dbReference type="GO" id="GO:0048704">
    <property type="term" value="P:embryonic skeletal system morphogenesis"/>
    <property type="evidence" value="ECO:0000314"/>
    <property type="project" value="UniProtKB"/>
</dbReference>
<dbReference type="GO" id="GO:0007156">
    <property type="term" value="P:homophilic cell adhesion via plasma membrane adhesion molecules"/>
    <property type="evidence" value="ECO:0000314"/>
    <property type="project" value="UniProtKB"/>
</dbReference>
<dbReference type="CDD" id="cd00063">
    <property type="entry name" value="FN3"/>
    <property type="match status" value="6"/>
</dbReference>
<dbReference type="CDD" id="cd00096">
    <property type="entry name" value="Ig"/>
    <property type="match status" value="2"/>
</dbReference>
<dbReference type="CDD" id="cd05734">
    <property type="entry name" value="Ig_DSCAM"/>
    <property type="match status" value="1"/>
</dbReference>
<dbReference type="CDD" id="cd05735">
    <property type="entry name" value="Ig_DSCAM"/>
    <property type="match status" value="1"/>
</dbReference>
<dbReference type="FunFam" id="2.60.40.10:FF:000333">
    <property type="entry name" value="Down syndrome cell adhesion molecule"/>
    <property type="match status" value="1"/>
</dbReference>
<dbReference type="FunFam" id="2.60.40.10:FF:000729">
    <property type="entry name" value="Down syndrome cell adhesion molecule"/>
    <property type="match status" value="1"/>
</dbReference>
<dbReference type="FunFam" id="2.60.40.10:FF:000141">
    <property type="entry name" value="Down syndrome cell adhesion molecule a"/>
    <property type="match status" value="1"/>
</dbReference>
<dbReference type="FunFam" id="2.60.40.10:FF:000176">
    <property type="entry name" value="Down syndrome cell adhesion molecule a"/>
    <property type="match status" value="1"/>
</dbReference>
<dbReference type="FunFam" id="2.60.40.10:FF:000215">
    <property type="entry name" value="Down syndrome cell adhesion molecule a"/>
    <property type="match status" value="1"/>
</dbReference>
<dbReference type="FunFam" id="2.60.40.10:FF:000017">
    <property type="entry name" value="Down syndrome cell adhesion molecule b"/>
    <property type="match status" value="1"/>
</dbReference>
<dbReference type="FunFam" id="2.60.40.10:FF:000104">
    <property type="entry name" value="Down syndrome cell adhesion molecule b"/>
    <property type="match status" value="1"/>
</dbReference>
<dbReference type="FunFam" id="2.60.40.10:FF:000167">
    <property type="entry name" value="Down syndrome cell adhesion molecule b"/>
    <property type="match status" value="1"/>
</dbReference>
<dbReference type="FunFam" id="2.60.40.10:FF:000172">
    <property type="entry name" value="Down syndrome cell adhesion molecule b"/>
    <property type="match status" value="1"/>
</dbReference>
<dbReference type="FunFam" id="2.60.40.10:FF:000219">
    <property type="entry name" value="Down syndrome cell adhesion molecule homolog"/>
    <property type="match status" value="1"/>
</dbReference>
<dbReference type="FunFam" id="2.60.40.10:FF:000229">
    <property type="entry name" value="Down syndrome cell adhesion molecule homolog"/>
    <property type="match status" value="1"/>
</dbReference>
<dbReference type="FunFam" id="2.60.40.10:FF:000120">
    <property type="entry name" value="Down syndrome cell adhesion molecule like 1"/>
    <property type="match status" value="1"/>
</dbReference>
<dbReference type="FunFam" id="2.60.40.10:FF:000264">
    <property type="entry name" value="Down syndrome cell adhesion molecule like 1"/>
    <property type="match status" value="1"/>
</dbReference>
<dbReference type="FunFam" id="2.60.40.10:FF:000315">
    <property type="entry name" value="Down syndrome cell adhesion molecule like 1"/>
    <property type="match status" value="1"/>
</dbReference>
<dbReference type="FunFam" id="2.60.40.10:FF:000482">
    <property type="entry name" value="Down syndrome cell adhesion molecule like 1"/>
    <property type="match status" value="1"/>
</dbReference>
<dbReference type="FunFam" id="2.60.40.10:FF:000477">
    <property type="entry name" value="DS cell adhesion molecule like 1"/>
    <property type="match status" value="1"/>
</dbReference>
<dbReference type="Gene3D" id="2.60.40.10">
    <property type="entry name" value="Immunoglobulins"/>
    <property type="match status" value="16"/>
</dbReference>
<dbReference type="InterPro" id="IPR056754">
    <property type="entry name" value="DSCAM/DSCAML_C"/>
</dbReference>
<dbReference type="InterPro" id="IPR003961">
    <property type="entry name" value="FN3_dom"/>
</dbReference>
<dbReference type="InterPro" id="IPR036116">
    <property type="entry name" value="FN3_sf"/>
</dbReference>
<dbReference type="InterPro" id="IPR007110">
    <property type="entry name" value="Ig-like_dom"/>
</dbReference>
<dbReference type="InterPro" id="IPR036179">
    <property type="entry name" value="Ig-like_dom_sf"/>
</dbReference>
<dbReference type="InterPro" id="IPR013783">
    <property type="entry name" value="Ig-like_fold"/>
</dbReference>
<dbReference type="InterPro" id="IPR013098">
    <property type="entry name" value="Ig_I-set"/>
</dbReference>
<dbReference type="InterPro" id="IPR003599">
    <property type="entry name" value="Ig_sub"/>
</dbReference>
<dbReference type="InterPro" id="IPR003598">
    <property type="entry name" value="Ig_sub2"/>
</dbReference>
<dbReference type="InterPro" id="IPR013106">
    <property type="entry name" value="Ig_V-set"/>
</dbReference>
<dbReference type="PANTHER" id="PTHR10075">
    <property type="entry name" value="BASIGIN RELATED"/>
    <property type="match status" value="1"/>
</dbReference>
<dbReference type="PANTHER" id="PTHR10075:SF100">
    <property type="entry name" value="FASCICLIN-2"/>
    <property type="match status" value="1"/>
</dbReference>
<dbReference type="Pfam" id="PF00041">
    <property type="entry name" value="fn3"/>
    <property type="match status" value="5"/>
</dbReference>
<dbReference type="Pfam" id="PF25059">
    <property type="entry name" value="FN3_DSCAM-DSCAML_C"/>
    <property type="match status" value="1"/>
</dbReference>
<dbReference type="Pfam" id="PF07679">
    <property type="entry name" value="I-set"/>
    <property type="match status" value="4"/>
</dbReference>
<dbReference type="Pfam" id="PF13927">
    <property type="entry name" value="Ig_3"/>
    <property type="match status" value="4"/>
</dbReference>
<dbReference type="SMART" id="SM00060">
    <property type="entry name" value="FN3"/>
    <property type="match status" value="6"/>
</dbReference>
<dbReference type="SMART" id="SM00409">
    <property type="entry name" value="IG"/>
    <property type="match status" value="10"/>
</dbReference>
<dbReference type="SMART" id="SM00408">
    <property type="entry name" value="IGc2"/>
    <property type="match status" value="9"/>
</dbReference>
<dbReference type="SMART" id="SM00406">
    <property type="entry name" value="IGv"/>
    <property type="match status" value="2"/>
</dbReference>
<dbReference type="SUPFAM" id="SSF49265">
    <property type="entry name" value="Fibronectin type III"/>
    <property type="match status" value="3"/>
</dbReference>
<dbReference type="SUPFAM" id="SSF48726">
    <property type="entry name" value="Immunoglobulin"/>
    <property type="match status" value="10"/>
</dbReference>
<dbReference type="PROSITE" id="PS50853">
    <property type="entry name" value="FN3"/>
    <property type="match status" value="6"/>
</dbReference>
<dbReference type="PROSITE" id="PS50835">
    <property type="entry name" value="IG_LIKE"/>
    <property type="match status" value="10"/>
</dbReference>
<sequence>MWLVTFLLLLDSLHKARPEDVGTSLYFVNDSLQQVTFSSSVGVVVPCPAAGSPSAALRWYLATGDDIYDVPHIRHVHANGTLQLYPFSPSAFNSFIHDNDYFCTAENAAGKIRSPNIRVKAVFREPYTVRVEDQRSMRGNVAVFKCLIPSSVQEYVSVVSWEKDTVSIIPEHRFFITYHGGLYISDVQKEDALSTYRCITKHKYSGETRQSNGARLSVTDPAESIPTILDGFHSQEVWAGHTVELPCTASGYPIPAIRWLKDGRPLPADSRWTKRITGLTISDLRTEDSGTYICEVTNTFGSAEATGILMVIDPLHVTLTPKKLKTGIGSTVILSCALTGSPEFTIRWYRNTELVLPDEAISIRGLSNETLLITSAQKSHSGAYQCFATRKAQTAQDFAIIALEDGTPRIVSSFSEKVVNPGEQFSLMCAAKGAPPPTVTWALDDEPIVRDGSHRTNQYTMSDGTTISHMNVTGPQIRDGGVYRCTARNLVGSAEYQARINVRGPPSIRAMRNITAVAGRDTLINCRVIGYPYYSIKWYKDALLLPDNHRQVVFENGTLKLTDVQKGMDEGEYLCSVLIQPQLSISQSVHVAVKVPPLIQPFEFPPASIGQLLYIPCVVSSGDMPIRITWRKDGQVIISGSGVTIESKEFMSSLQISSVSLKHNGNYTCIASNAAATVSRERQLIVRVPPRFVVQPNNQDGIYGKAGVLNCSVDGYPPPKVMWKHAKGSGNPQQYHPVPLTGRIQILPNSSLLIRHVLEEDIGYYLCQASNGVGTDISKSMFLTVKIPAMITSHPNTTIAIKGHAKELNCTARGERPIIIRWEKGDTVIDPDRVMRYAIATKDNGDEVVSTLKLKPADRGDSVFFSCHAINSYGEDRGLIQLTVQEPPDPPELEIREVKARSMNLRWTQRFDGNSIITGFDIEYKNKSDSWDFKQSTRNISPTINQANIVDLHPASVYSIRMYSFNKIGRSEPSKELTISTEEAAPDGPPMDVTLQPVTSQSIQVTWKAPKKELQNGVIRGYQIGYRENSPGSNGQYSIVEMKATGDSEVYTLDNLKKFAQYGVVVQAFNRAGTGPSSSEINATTLEDVPSQPPENVRALSITSDVAVISWSEPPRSTLNGVLKGYRVIFWSLYVDGEWGEMQNITTTRERVELRGMEKFTNYSVQVLAYTQAGDGVRSSVLYIQTKEDVPGPPAGIKAVPSSASSVVVSWLPPTKPNGVIRKYTIFCSSPGSGQPAPSEYETSPEQLFYRIAHLNRGQQYLLWVAAVTSAGRGNSSEKVTIEPAGKAPAKIISFGGTVTTPWMKDVRLPCNSVGDPAPAVKWTKDSEDSAIPVSMDGHRLIHTNGTLLLRAVKAEDSGYYTCTATNTGGFDTIIVNLLVQVPPDQPRLTVSKTSASSITLTWIPGDNGGSSIRGFVLQYSVDNSEEWKDVFISSSERSFKLDSLKCGTWYKVKLAAKNSVGSGRISEIIEAKTHGREPSFSKDQHLFTHINSTHARLNLQGWNNGGCPITAIVLEYRPKGTWAWQGLRANSSGEVFLTELREATWYELRMRACNSAGCGNETAQFATLDYDGSTIPPIKSAQGEGDDVKKLFTIGCPVILATLGVALLFIVRKKRKEKRLKRLRDAKSLAEMLISKNNRSFDTPVKGPPQGPRLHIDIPRVQLLIEDKEGIKQLGDDKATIPVTDAEFSQAVNPQSFCTGVSLHHPTLIQSTGPLIDMSDIRPGTNPVSRKNVKSAHSTRNRYSSQWTLTKCQASTPARTLTSDWRTVGSQHGVTVTESDSYSASLSQDTDKGRNSMVSTESASSTYEELARAYEHAKLEEQLQHAKFEITECFISDSSSDQMTTGTNENADSMTSMSTPSEPGICRFTASPPKPQDADRGKNVAVPIPHRANKSDYCNLPLYAKSEAFFRKADGREPCPVVPPREASIRNLARTYHTQARHLTLDPASKSLGLPHPGAPAAASTATLPQRTLAMPAPPAGTAPPAPGPTPAEPPTAPSAAPPAPSTEPPRAGGPHTKMGGSRDSLLEMSTSGVGRSQKQGAGAYSKSYTLV</sequence>
<proteinExistence type="evidence at protein level"/>
<evidence type="ECO:0000250" key="1">
    <source>
        <dbReference type="UniProtKB" id="E1C8P7"/>
    </source>
</evidence>
<evidence type="ECO:0000250" key="2">
    <source>
        <dbReference type="UniProtKB" id="Q4VA61"/>
    </source>
</evidence>
<evidence type="ECO:0000255" key="3"/>
<evidence type="ECO:0000255" key="4">
    <source>
        <dbReference type="PROSITE-ProRule" id="PRU00114"/>
    </source>
</evidence>
<evidence type="ECO:0000255" key="5">
    <source>
        <dbReference type="PROSITE-ProRule" id="PRU00316"/>
    </source>
</evidence>
<evidence type="ECO:0000256" key="6">
    <source>
        <dbReference type="SAM" id="MobiDB-lite"/>
    </source>
</evidence>
<evidence type="ECO:0000269" key="7">
    <source>
    </source>
</evidence>
<evidence type="ECO:0000269" key="8">
    <source>
    </source>
</evidence>
<evidence type="ECO:0000269" key="9">
    <source>
    </source>
</evidence>
<evidence type="ECO:0000303" key="10">
    <source>
    </source>
</evidence>
<evidence type="ECO:0000303" key="11">
    <source ref="3"/>
</evidence>
<evidence type="ECO:0000305" key="12"/>
<evidence type="ECO:0007829" key="13">
    <source>
        <dbReference type="PDB" id="1VA9"/>
    </source>
</evidence>
<comment type="function">
    <text evidence="1 2 7">Cell adhesion molecule that plays a role in neuronal self-avoidance (PubMed:11453658). Promotes repulsion between specific neuronal processes of either the same cell or the same subtype of cells. Promotes both isoneuronal self-avoidance for creating an orderly neurite arborization in retinal rod bipolar cells and heteroneuronal self-avoidance to maintain mosaic spacing between AII amacrine cells (By similarity). Adhesion molecule that promotes lamina-specific synaptic connections in the retina: expressed in specific subsets of interneurons and retinal ganglion cells (RGCs) and promotes synaptic connectivity via homophilic interactions (By similarity).</text>
</comment>
<comment type="subunit">
    <text evidence="1">Homodimer; mediates homophilic interactions to promote cell adhesion.</text>
</comment>
<comment type="subcellular location">
    <subcellularLocation>
        <location evidence="7">Cell membrane</location>
        <topology evidence="12">Single-pass type I membrane protein</topology>
    </subcellularLocation>
    <subcellularLocation>
        <location evidence="1">Synapse</location>
    </subcellularLocation>
</comment>
<comment type="alternative products">
    <event type="alternative splicing"/>
    <isoform>
        <id>Q8TD84-1</id>
        <name>1</name>
        <name>1a</name>
        <sequence type="displayed"/>
    </isoform>
    <isoform>
        <id>Q8TD84-2</id>
        <name>2</name>
        <name>1b</name>
        <sequence type="described" ref="VSP_014978"/>
    </isoform>
</comment>
<comment type="tissue specificity">
    <text evidence="7 8">Detected in heart, liver, pancreas, skeletal muscle, kidney and in brain, in particular in the amygdala, caudate nucleus, corpus callosum, hippocampus, substantia nigra, thalamus and subthalamus.</text>
</comment>
<comment type="sequence caution" evidence="12">
    <conflict type="erroneous initiation">
        <sequence resource="EMBL-CDS" id="AAM09558"/>
    </conflict>
    <text>Extended N-terminus.</text>
</comment>
<comment type="sequence caution" evidence="12">
    <conflict type="miscellaneous discrepancy">
        <sequence resource="EMBL-CDS" id="AAN32614"/>
    </conflict>
    <text>Aberrant splice donor site.</text>
</comment>
<comment type="sequence caution" evidence="12">
    <conflict type="erroneous initiation">
        <sequence resource="EMBL-CDS" id="BAA86446"/>
    </conflict>
    <text>Extended N-terminus.</text>
</comment>
<organism>
    <name type="scientific">Homo sapiens</name>
    <name type="common">Human</name>
    <dbReference type="NCBI Taxonomy" id="9606"/>
    <lineage>
        <taxon>Eukaryota</taxon>
        <taxon>Metazoa</taxon>
        <taxon>Chordata</taxon>
        <taxon>Craniata</taxon>
        <taxon>Vertebrata</taxon>
        <taxon>Euteleostomi</taxon>
        <taxon>Mammalia</taxon>
        <taxon>Eutheria</taxon>
        <taxon>Euarchontoglires</taxon>
        <taxon>Primates</taxon>
        <taxon>Haplorrhini</taxon>
        <taxon>Catarrhini</taxon>
        <taxon>Hominidae</taxon>
        <taxon>Homo</taxon>
    </lineage>
</organism>
<accession>Q8TD84</accession>
<accession>G3V1B5</accession>
<accession>Q76MU9</accession>
<accession>Q8IZY3</accession>
<accession>Q8IZY4</accession>
<accession>Q8WXU7</accession>
<accession>Q9ULT7</accession>
<gene>
    <name type="primary">DSCAML1</name>
    <name type="synonym">DSCAM2</name>
    <name evidence="10" type="synonym">KIAA1132</name>
</gene>